<protein>
    <recommendedName>
        <fullName evidence="1">Enolase</fullName>
        <ecNumber evidence="1">4.2.1.11</ecNumber>
    </recommendedName>
    <alternativeName>
        <fullName evidence="1">2-phospho-D-glycerate hydro-lyase</fullName>
    </alternativeName>
    <alternativeName>
        <fullName evidence="1">2-phosphoglycerate dehydratase</fullName>
    </alternativeName>
</protein>
<organism>
    <name type="scientific">Mycoplasmopsis synoviae (strain 53)</name>
    <name type="common">Mycoplasma synoviae</name>
    <dbReference type="NCBI Taxonomy" id="262723"/>
    <lineage>
        <taxon>Bacteria</taxon>
        <taxon>Bacillati</taxon>
        <taxon>Mycoplasmatota</taxon>
        <taxon>Mycoplasmoidales</taxon>
        <taxon>Metamycoplasmataceae</taxon>
        <taxon>Mycoplasmopsis</taxon>
    </lineage>
</organism>
<feature type="chain" id="PRO_0000267060" description="Enolase">
    <location>
        <begin position="1"/>
        <end position="452"/>
    </location>
</feature>
<feature type="active site" description="Proton donor" evidence="1">
    <location>
        <position position="209"/>
    </location>
</feature>
<feature type="active site" description="Proton acceptor" evidence="1">
    <location>
        <position position="362"/>
    </location>
</feature>
<feature type="binding site" evidence="1">
    <location>
        <position position="167"/>
    </location>
    <ligand>
        <name>(2R)-2-phosphoglycerate</name>
        <dbReference type="ChEBI" id="CHEBI:58289"/>
    </ligand>
</feature>
<feature type="binding site" evidence="1">
    <location>
        <position position="250"/>
    </location>
    <ligand>
        <name>Mg(2+)</name>
        <dbReference type="ChEBI" id="CHEBI:18420"/>
    </ligand>
</feature>
<feature type="binding site" evidence="1">
    <location>
        <position position="310"/>
    </location>
    <ligand>
        <name>Mg(2+)</name>
        <dbReference type="ChEBI" id="CHEBI:18420"/>
    </ligand>
</feature>
<feature type="binding site" evidence="1">
    <location>
        <position position="337"/>
    </location>
    <ligand>
        <name>Mg(2+)</name>
        <dbReference type="ChEBI" id="CHEBI:18420"/>
    </ligand>
</feature>
<feature type="binding site" evidence="1">
    <location>
        <position position="362"/>
    </location>
    <ligand>
        <name>(2R)-2-phosphoglycerate</name>
        <dbReference type="ChEBI" id="CHEBI:58289"/>
    </ligand>
</feature>
<feature type="binding site" evidence="1">
    <location>
        <position position="391"/>
    </location>
    <ligand>
        <name>(2R)-2-phosphoglycerate</name>
        <dbReference type="ChEBI" id="CHEBI:58289"/>
    </ligand>
</feature>
<feature type="binding site" evidence="1">
    <location>
        <position position="392"/>
    </location>
    <ligand>
        <name>(2R)-2-phosphoglycerate</name>
        <dbReference type="ChEBI" id="CHEBI:58289"/>
    </ligand>
</feature>
<feature type="binding site" evidence="1">
    <location>
        <position position="413"/>
    </location>
    <ligand>
        <name>(2R)-2-phosphoglycerate</name>
        <dbReference type="ChEBI" id="CHEBI:58289"/>
    </ligand>
</feature>
<comment type="function">
    <text evidence="1">Catalyzes the reversible conversion of 2-phosphoglycerate (2-PG) into phosphoenolpyruvate (PEP). It is essential for the degradation of carbohydrates via glycolysis.</text>
</comment>
<comment type="catalytic activity">
    <reaction evidence="1">
        <text>(2R)-2-phosphoglycerate = phosphoenolpyruvate + H2O</text>
        <dbReference type="Rhea" id="RHEA:10164"/>
        <dbReference type="ChEBI" id="CHEBI:15377"/>
        <dbReference type="ChEBI" id="CHEBI:58289"/>
        <dbReference type="ChEBI" id="CHEBI:58702"/>
        <dbReference type="EC" id="4.2.1.11"/>
    </reaction>
</comment>
<comment type="cofactor">
    <cofactor evidence="1">
        <name>Mg(2+)</name>
        <dbReference type="ChEBI" id="CHEBI:18420"/>
    </cofactor>
    <text evidence="1">Binds a second Mg(2+) ion via substrate during catalysis.</text>
</comment>
<comment type="pathway">
    <text evidence="1">Carbohydrate degradation; glycolysis; pyruvate from D-glyceraldehyde 3-phosphate: step 4/5.</text>
</comment>
<comment type="subcellular location">
    <subcellularLocation>
        <location evidence="1">Cytoplasm</location>
    </subcellularLocation>
    <subcellularLocation>
        <location evidence="1">Secreted</location>
    </subcellularLocation>
    <subcellularLocation>
        <location evidence="1">Cell surface</location>
    </subcellularLocation>
    <text evidence="1">Fractions of enolase are present in both the cytoplasm and on the cell surface.</text>
</comment>
<comment type="similarity">
    <text evidence="1">Belongs to the enolase family.</text>
</comment>
<proteinExistence type="inferred from homology"/>
<name>ENO_MYCS5</name>
<reference key="1">
    <citation type="journal article" date="2005" name="J. Bacteriol.">
        <title>Swine and poultry pathogens: the complete genome sequences of two strains of Mycoplasma hyopneumoniae and a strain of Mycoplasma synoviae.</title>
        <authorList>
            <person name="Vasconcelos A.T.R."/>
            <person name="Ferreira H.B."/>
            <person name="Bizarro C.V."/>
            <person name="Bonatto S.L."/>
            <person name="Carvalho M.O."/>
            <person name="Pinto P.M."/>
            <person name="Almeida D.F."/>
            <person name="Almeida L.G.P."/>
            <person name="Almeida R."/>
            <person name="Alves-Junior L."/>
            <person name="Assuncao E.N."/>
            <person name="Azevedo V.A.C."/>
            <person name="Bogo M.R."/>
            <person name="Brigido M.M."/>
            <person name="Brocchi M."/>
            <person name="Burity H.A."/>
            <person name="Camargo A.A."/>
            <person name="Camargo S.S."/>
            <person name="Carepo M.S."/>
            <person name="Carraro D.M."/>
            <person name="de Mattos Cascardo J.C."/>
            <person name="Castro L.A."/>
            <person name="Cavalcanti G."/>
            <person name="Chemale G."/>
            <person name="Collevatti R.G."/>
            <person name="Cunha C.W."/>
            <person name="Dallagiovanna B."/>
            <person name="Dambros B.P."/>
            <person name="Dellagostin O.A."/>
            <person name="Falcao C."/>
            <person name="Fantinatti-Garboggini F."/>
            <person name="Felipe M.S.S."/>
            <person name="Fiorentin L."/>
            <person name="Franco G.R."/>
            <person name="Freitas N.S.A."/>
            <person name="Frias D."/>
            <person name="Grangeiro T.B."/>
            <person name="Grisard E.C."/>
            <person name="Guimaraes C.T."/>
            <person name="Hungria M."/>
            <person name="Jardim S.N."/>
            <person name="Krieger M.A."/>
            <person name="Laurino J.P."/>
            <person name="Lima L.F.A."/>
            <person name="Lopes M.I."/>
            <person name="Loreto E.L.S."/>
            <person name="Madeira H.M.F."/>
            <person name="Manfio G.P."/>
            <person name="Maranhao A.Q."/>
            <person name="Martinkovics C.T."/>
            <person name="Medeiros S.R.B."/>
            <person name="Moreira M.A.M."/>
            <person name="Neiva M."/>
            <person name="Ramalho-Neto C.E."/>
            <person name="Nicolas M.F."/>
            <person name="Oliveira S.C."/>
            <person name="Paixao R.F.C."/>
            <person name="Pedrosa F.O."/>
            <person name="Pena S.D.J."/>
            <person name="Pereira M."/>
            <person name="Pereira-Ferrari L."/>
            <person name="Piffer I."/>
            <person name="Pinto L.S."/>
            <person name="Potrich D.P."/>
            <person name="Salim A.C.M."/>
            <person name="Santos F.R."/>
            <person name="Schmitt R."/>
            <person name="Schneider M.P.C."/>
            <person name="Schrank A."/>
            <person name="Schrank I.S."/>
            <person name="Schuck A.F."/>
            <person name="Seuanez H.N."/>
            <person name="Silva D.W."/>
            <person name="Silva R."/>
            <person name="Silva S.C."/>
            <person name="Soares C.M.A."/>
            <person name="Souza K.R.L."/>
            <person name="Souza R.C."/>
            <person name="Staats C.C."/>
            <person name="Steffens M.B.R."/>
            <person name="Teixeira S.M.R."/>
            <person name="Urmenyi T.P."/>
            <person name="Vainstein M.H."/>
            <person name="Zuccherato L.W."/>
            <person name="Simpson A.J.G."/>
            <person name="Zaha A."/>
        </authorList>
    </citation>
    <scope>NUCLEOTIDE SEQUENCE [LARGE SCALE GENOMIC DNA]</scope>
    <source>
        <strain>53</strain>
    </source>
</reference>
<keyword id="KW-0963">Cytoplasm</keyword>
<keyword id="KW-0324">Glycolysis</keyword>
<keyword id="KW-0456">Lyase</keyword>
<keyword id="KW-0460">Magnesium</keyword>
<keyword id="KW-0479">Metal-binding</keyword>
<keyword id="KW-1185">Reference proteome</keyword>
<keyword id="KW-0964">Secreted</keyword>
<accession>Q4A740</accession>
<dbReference type="EC" id="4.2.1.11" evidence="1"/>
<dbReference type="EMBL" id="AE017245">
    <property type="protein sequence ID" value="AAZ43431.1"/>
    <property type="molecule type" value="Genomic_DNA"/>
</dbReference>
<dbReference type="RefSeq" id="WP_011283175.1">
    <property type="nucleotide sequence ID" value="NC_007294.1"/>
</dbReference>
<dbReference type="SMR" id="Q4A740"/>
<dbReference type="STRING" id="262723.MS53_0009"/>
<dbReference type="MoonProt" id="Q4A740"/>
<dbReference type="KEGG" id="msy:MS53_0009"/>
<dbReference type="eggNOG" id="COG0148">
    <property type="taxonomic scope" value="Bacteria"/>
</dbReference>
<dbReference type="HOGENOM" id="CLU_031223_2_1_14"/>
<dbReference type="OrthoDB" id="9804716at2"/>
<dbReference type="UniPathway" id="UPA00109">
    <property type="reaction ID" value="UER00187"/>
</dbReference>
<dbReference type="Proteomes" id="UP000000549">
    <property type="component" value="Chromosome"/>
</dbReference>
<dbReference type="GO" id="GO:0009986">
    <property type="term" value="C:cell surface"/>
    <property type="evidence" value="ECO:0007669"/>
    <property type="project" value="UniProtKB-SubCell"/>
</dbReference>
<dbReference type="GO" id="GO:0005576">
    <property type="term" value="C:extracellular region"/>
    <property type="evidence" value="ECO:0007669"/>
    <property type="project" value="UniProtKB-SubCell"/>
</dbReference>
<dbReference type="GO" id="GO:0000015">
    <property type="term" value="C:phosphopyruvate hydratase complex"/>
    <property type="evidence" value="ECO:0007669"/>
    <property type="project" value="InterPro"/>
</dbReference>
<dbReference type="GO" id="GO:0000287">
    <property type="term" value="F:magnesium ion binding"/>
    <property type="evidence" value="ECO:0007669"/>
    <property type="project" value="UniProtKB-UniRule"/>
</dbReference>
<dbReference type="GO" id="GO:0004634">
    <property type="term" value="F:phosphopyruvate hydratase activity"/>
    <property type="evidence" value="ECO:0007669"/>
    <property type="project" value="UniProtKB-UniRule"/>
</dbReference>
<dbReference type="GO" id="GO:0006096">
    <property type="term" value="P:glycolytic process"/>
    <property type="evidence" value="ECO:0007669"/>
    <property type="project" value="UniProtKB-UniRule"/>
</dbReference>
<dbReference type="CDD" id="cd03313">
    <property type="entry name" value="enolase"/>
    <property type="match status" value="1"/>
</dbReference>
<dbReference type="FunFam" id="3.30.390.10:FF:000001">
    <property type="entry name" value="Enolase"/>
    <property type="match status" value="1"/>
</dbReference>
<dbReference type="Gene3D" id="3.20.20.120">
    <property type="entry name" value="Enolase-like C-terminal domain"/>
    <property type="match status" value="1"/>
</dbReference>
<dbReference type="Gene3D" id="3.30.390.10">
    <property type="entry name" value="Enolase-like, N-terminal domain"/>
    <property type="match status" value="1"/>
</dbReference>
<dbReference type="HAMAP" id="MF_00318">
    <property type="entry name" value="Enolase"/>
    <property type="match status" value="1"/>
</dbReference>
<dbReference type="InterPro" id="IPR000941">
    <property type="entry name" value="Enolase"/>
</dbReference>
<dbReference type="InterPro" id="IPR036849">
    <property type="entry name" value="Enolase-like_C_sf"/>
</dbReference>
<dbReference type="InterPro" id="IPR029017">
    <property type="entry name" value="Enolase-like_N"/>
</dbReference>
<dbReference type="InterPro" id="IPR020810">
    <property type="entry name" value="Enolase_C"/>
</dbReference>
<dbReference type="InterPro" id="IPR020809">
    <property type="entry name" value="Enolase_CS"/>
</dbReference>
<dbReference type="InterPro" id="IPR020811">
    <property type="entry name" value="Enolase_N"/>
</dbReference>
<dbReference type="NCBIfam" id="TIGR01060">
    <property type="entry name" value="eno"/>
    <property type="match status" value="1"/>
</dbReference>
<dbReference type="PANTHER" id="PTHR11902">
    <property type="entry name" value="ENOLASE"/>
    <property type="match status" value="1"/>
</dbReference>
<dbReference type="PANTHER" id="PTHR11902:SF1">
    <property type="entry name" value="ENOLASE"/>
    <property type="match status" value="1"/>
</dbReference>
<dbReference type="Pfam" id="PF00113">
    <property type="entry name" value="Enolase_C"/>
    <property type="match status" value="1"/>
</dbReference>
<dbReference type="Pfam" id="PF03952">
    <property type="entry name" value="Enolase_N"/>
    <property type="match status" value="1"/>
</dbReference>
<dbReference type="PIRSF" id="PIRSF001400">
    <property type="entry name" value="Enolase"/>
    <property type="match status" value="1"/>
</dbReference>
<dbReference type="PRINTS" id="PR00148">
    <property type="entry name" value="ENOLASE"/>
</dbReference>
<dbReference type="SFLD" id="SFLDF00002">
    <property type="entry name" value="enolase"/>
    <property type="match status" value="1"/>
</dbReference>
<dbReference type="SFLD" id="SFLDG00178">
    <property type="entry name" value="enolase"/>
    <property type="match status" value="1"/>
</dbReference>
<dbReference type="SMART" id="SM01192">
    <property type="entry name" value="Enolase_C"/>
    <property type="match status" value="1"/>
</dbReference>
<dbReference type="SMART" id="SM01193">
    <property type="entry name" value="Enolase_N"/>
    <property type="match status" value="1"/>
</dbReference>
<dbReference type="SUPFAM" id="SSF51604">
    <property type="entry name" value="Enolase C-terminal domain-like"/>
    <property type="match status" value="1"/>
</dbReference>
<dbReference type="SUPFAM" id="SSF54826">
    <property type="entry name" value="Enolase N-terminal domain-like"/>
    <property type="match status" value="1"/>
</dbReference>
<dbReference type="PROSITE" id="PS00164">
    <property type="entry name" value="ENOLASE"/>
    <property type="match status" value="1"/>
</dbReference>
<sequence length="452" mass="49331">MSAIKKIHAREVLDSRGNPTVQVEVYTELKGYGSAMVPSGASTGSREALELRDKGSKFESNWFGGKGVMQAVENVNKLIAPALIGFEVTDQRQVDLAMKALDGTKNKEKLGANAILGVSLAVARAAANELDLPLYKYLGGFNAHKLPLPMLNVINGGEHASNTLDFQEFMVMPVGAKSFREALQMANFVFHNLAKLLKKHGHGVQVGDEGGFAPNFKSHEEALDFLVEAIKLSGYKPATSGEKAVAIAMDCASSELYKDGKYTFGKLKKAIEEKQPGFENLGKTKLVYTTDELIDYLDHLVSKYPIVSIEDGLAESDWAGFEKLTKRLGHKLQVVGDDLTVTNTELLAKAIERKAMNSILIKVNQIGSLTETFEAIQMAQMANMTAVVSHRSGETEDTTIADVAVAMNTGQIKTGSMSRTDRIAKYNRLLAIEEELSKASTFPKDVFYNLKK</sequence>
<evidence type="ECO:0000255" key="1">
    <source>
        <dbReference type="HAMAP-Rule" id="MF_00318"/>
    </source>
</evidence>
<gene>
    <name evidence="1" type="primary">eno</name>
    <name type="ordered locus">MS53_0009</name>
</gene>